<proteinExistence type="evidence at protein level"/>
<dbReference type="EC" id="3.4.22.67" evidence="5"/>
<dbReference type="PIR" id="A59041">
    <property type="entry name" value="A59041"/>
</dbReference>
<dbReference type="PDB" id="1CQD">
    <property type="method" value="X-ray"/>
    <property type="resolution" value="2.10 A"/>
    <property type="chains" value="A/B/C/D=1-221"/>
</dbReference>
<dbReference type="PDBsum" id="1CQD"/>
<dbReference type="SMR" id="P82474"/>
<dbReference type="MEROPS" id="C01.017"/>
<dbReference type="GlyConnect" id="117">
    <property type="glycosylation" value="2 N-Linked glycans (2 sites)"/>
</dbReference>
<dbReference type="BRENDA" id="3.4.22.67">
    <property type="organism ID" value="6754"/>
</dbReference>
<dbReference type="EvolutionaryTrace" id="P82474"/>
<dbReference type="GO" id="GO:0008234">
    <property type="term" value="F:cysteine-type peptidase activity"/>
    <property type="evidence" value="ECO:0007669"/>
    <property type="project" value="UniProtKB-KW"/>
</dbReference>
<dbReference type="GO" id="GO:0006508">
    <property type="term" value="P:proteolysis"/>
    <property type="evidence" value="ECO:0007669"/>
    <property type="project" value="UniProtKB-KW"/>
</dbReference>
<dbReference type="CDD" id="cd02248">
    <property type="entry name" value="Peptidase_C1A"/>
    <property type="match status" value="1"/>
</dbReference>
<dbReference type="FunFam" id="3.90.70.10:FF:000138">
    <property type="entry name" value="Cruzipain"/>
    <property type="match status" value="1"/>
</dbReference>
<dbReference type="Gene3D" id="3.90.70.10">
    <property type="entry name" value="Cysteine proteinases"/>
    <property type="match status" value="1"/>
</dbReference>
<dbReference type="InterPro" id="IPR038765">
    <property type="entry name" value="Papain-like_cys_pep_sf"/>
</dbReference>
<dbReference type="InterPro" id="IPR000169">
    <property type="entry name" value="Pept_cys_AS"/>
</dbReference>
<dbReference type="InterPro" id="IPR025660">
    <property type="entry name" value="Pept_his_AS"/>
</dbReference>
<dbReference type="InterPro" id="IPR013128">
    <property type="entry name" value="Peptidase_C1A"/>
</dbReference>
<dbReference type="InterPro" id="IPR000668">
    <property type="entry name" value="Peptidase_C1A_C"/>
</dbReference>
<dbReference type="InterPro" id="IPR039417">
    <property type="entry name" value="Peptidase_C1A_papain-like"/>
</dbReference>
<dbReference type="PANTHER" id="PTHR12411">
    <property type="entry name" value="CYSTEINE PROTEASE FAMILY C1-RELATED"/>
    <property type="match status" value="1"/>
</dbReference>
<dbReference type="Pfam" id="PF00112">
    <property type="entry name" value="Peptidase_C1"/>
    <property type="match status" value="1"/>
</dbReference>
<dbReference type="PRINTS" id="PR00705">
    <property type="entry name" value="PAPAIN"/>
</dbReference>
<dbReference type="SMART" id="SM00645">
    <property type="entry name" value="Pept_C1"/>
    <property type="match status" value="1"/>
</dbReference>
<dbReference type="SUPFAM" id="SSF54001">
    <property type="entry name" value="Cysteine proteinases"/>
    <property type="match status" value="1"/>
</dbReference>
<dbReference type="PROSITE" id="PS00139">
    <property type="entry name" value="THIOL_PROTEASE_CYS"/>
    <property type="match status" value="1"/>
</dbReference>
<dbReference type="PROSITE" id="PS00639">
    <property type="entry name" value="THIOL_PROTEASE_HIS"/>
    <property type="match status" value="1"/>
</dbReference>
<protein>
    <recommendedName>
        <fullName>Zingipain-2</fullName>
        <ecNumber evidence="5">3.4.22.67</ecNumber>
    </recommendedName>
    <alternativeName>
        <fullName>Cysteine proteinase GP-II</fullName>
    </alternativeName>
</protein>
<sequence>DDLPDSIDWRENGAVVPVKNQGGCGSCWAFSTVAAVEGINQIVTGDLISLSEQQLVDCTTANHGCRGGWMNPAFQFIVNNGGINSEETYPYRGQDGICNSTVNAPVVSIDSYENVPSHNEQSLQKAVANQPVSVTMDAAGRDFQLYRSGIFTGSCNISANHALTVVGYGTENDKDFWIVKNSWGKNWGESGYIRAERNIENPDGKCGITRFASYPVKKGTN</sequence>
<evidence type="ECO:0000255" key="1">
    <source>
        <dbReference type="PROSITE-ProRule" id="PRU00498"/>
    </source>
</evidence>
<evidence type="ECO:0000255" key="2">
    <source>
        <dbReference type="PROSITE-ProRule" id="PRU10088"/>
    </source>
</evidence>
<evidence type="ECO:0000255" key="3">
    <source>
        <dbReference type="PROSITE-ProRule" id="PRU10089"/>
    </source>
</evidence>
<evidence type="ECO:0000269" key="4">
    <source>
    </source>
</evidence>
<evidence type="ECO:0000269" key="5">
    <source>
    </source>
</evidence>
<evidence type="ECO:0007744" key="6">
    <source>
        <dbReference type="PDB" id="1CQD"/>
    </source>
</evidence>
<evidence type="ECO:0007829" key="7">
    <source>
        <dbReference type="PDB" id="1CQD"/>
    </source>
</evidence>
<name>CPGP2_ZINOF</name>
<keyword id="KW-0002">3D-structure</keyword>
<keyword id="KW-0903">Direct protein sequencing</keyword>
<keyword id="KW-1015">Disulfide bond</keyword>
<keyword id="KW-0325">Glycoprotein</keyword>
<keyword id="KW-0378">Hydrolase</keyword>
<keyword id="KW-0645">Protease</keyword>
<keyword id="KW-0788">Thiol protease</keyword>
<comment type="function">
    <text evidence="5">Cysteine proteinase with a specific activity toward peptides with a proline residue at the P2 position.</text>
</comment>
<comment type="catalytic activity">
    <reaction evidence="5">
        <text>Preferential cleavage of peptides with a proline residue at the P2 position.</text>
        <dbReference type="EC" id="3.4.22.67"/>
    </reaction>
</comment>
<comment type="similarity">
    <text evidence="2 3">Belongs to the peptidase C1 family.</text>
</comment>
<accession>P82474</accession>
<reference key="1">
    <citation type="journal article" date="2000" name="Eur. J. Biochem.">
        <title>Amino-acid sequence and glycan structures of cysteine proteases with proline specificity from ginger rhizome Zingiber officinale.</title>
        <authorList>
            <person name="Choi K.H."/>
            <person name="Laursen R.A."/>
        </authorList>
    </citation>
    <scope>PROTEIN SEQUENCE</scope>
    <scope>FUNCTION</scope>
    <scope>CATALYTIC ACTIVITY</scope>
    <source>
        <tissue>Root</tissue>
    </source>
</reference>
<reference key="2">
    <citation type="journal article" date="1999" name="Biochemistry">
        <title>The 2.1 A structure of a cysteine protease with proline specificity from ginger rhizome, Zingiber officinale.</title>
        <authorList>
            <person name="Choi K.H."/>
            <person name="Laursen R.A."/>
            <person name="Allen K.N."/>
        </authorList>
    </citation>
    <scope>X-RAY CRYSTALLOGRAPHY (2.10 ANGSTROMS)</scope>
    <scope>DISULFIDE BONDS</scope>
    <scope>GLYCOSYLATION AT ASN-99 AND ASN-156</scope>
</reference>
<feature type="chain" id="PRO_0000050569" description="Zingipain-2">
    <location>
        <begin position="1"/>
        <end position="221"/>
    </location>
</feature>
<feature type="active site" evidence="2">
    <location>
        <position position="27"/>
    </location>
</feature>
<feature type="active site" evidence="3">
    <location>
        <position position="161"/>
    </location>
</feature>
<feature type="glycosylation site" id="CAR_000190" description="N-linked (GlcNAc...) asparagine" evidence="1 4">
    <location>
        <position position="99"/>
    </location>
</feature>
<feature type="glycosylation site" id="CAR_000200" description="N-linked (GlcNAc...) asparagine" evidence="1 4">
    <location>
        <position position="156"/>
    </location>
</feature>
<feature type="disulfide bond" evidence="4 6">
    <location>
        <begin position="24"/>
        <end position="65"/>
    </location>
</feature>
<feature type="disulfide bond" evidence="4 6">
    <location>
        <begin position="58"/>
        <end position="98"/>
    </location>
</feature>
<feature type="disulfide bond" evidence="4 6">
    <location>
        <begin position="155"/>
        <end position="206"/>
    </location>
</feature>
<feature type="turn" evidence="7">
    <location>
        <begin position="9"/>
        <end position="13"/>
    </location>
</feature>
<feature type="helix" evidence="7">
    <location>
        <begin position="27"/>
        <end position="44"/>
    </location>
</feature>
<feature type="helix" evidence="7">
    <location>
        <begin position="52"/>
        <end position="58"/>
    </location>
</feature>
<feature type="helix" evidence="7">
    <location>
        <begin position="70"/>
        <end position="80"/>
    </location>
</feature>
<feature type="turn" evidence="7">
    <location>
        <begin position="86"/>
        <end position="88"/>
    </location>
</feature>
<feature type="strand" evidence="7">
    <location>
        <begin position="100"/>
        <end position="102"/>
    </location>
</feature>
<feature type="strand" evidence="7">
    <location>
        <begin position="110"/>
        <end position="114"/>
    </location>
</feature>
<feature type="helix" evidence="7">
    <location>
        <begin position="120"/>
        <end position="127"/>
    </location>
</feature>
<feature type="strand" evidence="7">
    <location>
        <begin position="132"/>
        <end position="136"/>
    </location>
</feature>
<feature type="helix" evidence="7">
    <location>
        <begin position="141"/>
        <end position="144"/>
    </location>
</feature>
<feature type="strand" evidence="7">
    <location>
        <begin position="148"/>
        <end position="151"/>
    </location>
</feature>
<feature type="strand" evidence="7">
    <location>
        <begin position="161"/>
        <end position="171"/>
    </location>
</feature>
<feature type="strand" evidence="7">
    <location>
        <begin position="174"/>
        <end position="180"/>
    </location>
</feature>
<feature type="strand" evidence="7">
    <location>
        <begin position="192"/>
        <end position="196"/>
    </location>
</feature>
<feature type="helix" evidence="7">
    <location>
        <begin position="205"/>
        <end position="207"/>
    </location>
</feature>
<feature type="strand" evidence="7">
    <location>
        <begin position="213"/>
        <end position="216"/>
    </location>
</feature>
<organism>
    <name type="scientific">Zingiber officinale</name>
    <name type="common">Ginger</name>
    <name type="synonym">Amomum zingiber</name>
    <dbReference type="NCBI Taxonomy" id="94328"/>
    <lineage>
        <taxon>Eukaryota</taxon>
        <taxon>Viridiplantae</taxon>
        <taxon>Streptophyta</taxon>
        <taxon>Embryophyta</taxon>
        <taxon>Tracheophyta</taxon>
        <taxon>Spermatophyta</taxon>
        <taxon>Magnoliopsida</taxon>
        <taxon>Liliopsida</taxon>
        <taxon>Zingiberales</taxon>
        <taxon>Zingiberaceae</taxon>
        <taxon>Zingiber</taxon>
    </lineage>
</organism>